<keyword id="KW-0449">Lipoprotein</keyword>
<keyword id="KW-0472">Membrane</keyword>
<keyword id="KW-0488">Methylation</keyword>
<keyword id="KW-0564">Palmitate</keyword>
<keyword id="KW-0636">Prenylation</keyword>
<keyword id="KW-1185">Reference proteome</keyword>
<keyword id="KW-0807">Transducer</keyword>
<organism>
    <name type="scientific">Eremothecium gossypii (strain ATCC 10895 / CBS 109.51 / FGSC 9923 / NRRL Y-1056)</name>
    <name type="common">Yeast</name>
    <name type="synonym">Ashbya gossypii</name>
    <dbReference type="NCBI Taxonomy" id="284811"/>
    <lineage>
        <taxon>Eukaryota</taxon>
        <taxon>Fungi</taxon>
        <taxon>Dikarya</taxon>
        <taxon>Ascomycota</taxon>
        <taxon>Saccharomycotina</taxon>
        <taxon>Saccharomycetes</taxon>
        <taxon>Saccharomycetales</taxon>
        <taxon>Saccharomycetaceae</taxon>
        <taxon>Eremothecium</taxon>
    </lineage>
</organism>
<proteinExistence type="inferred from homology"/>
<gene>
    <name type="ordered locus">ACR176C</name>
</gene>
<dbReference type="EMBL" id="AE016816">
    <property type="protein sequence ID" value="AAS51402.1"/>
    <property type="status" value="ALT_INIT"/>
    <property type="molecule type" value="Genomic_DNA"/>
</dbReference>
<dbReference type="RefSeq" id="NP_983578.1">
    <property type="nucleotide sequence ID" value="NM_208931.1"/>
</dbReference>
<dbReference type="SMR" id="Q75BU5"/>
<dbReference type="FunCoup" id="Q75BU5">
    <property type="interactions" value="110"/>
</dbReference>
<dbReference type="STRING" id="284811.Q75BU5"/>
<dbReference type="GeneID" id="4619710"/>
<dbReference type="KEGG" id="ago:AGOS_ACR176C"/>
<dbReference type="eggNOG" id="ENOG502S5Z5">
    <property type="taxonomic scope" value="Eukaryota"/>
</dbReference>
<dbReference type="InParanoid" id="Q75BU5"/>
<dbReference type="OrthoDB" id="19232at2759"/>
<dbReference type="Proteomes" id="UP000000591">
    <property type="component" value="Chromosome III"/>
</dbReference>
<dbReference type="GO" id="GO:0005834">
    <property type="term" value="C:heterotrimeric G-protein complex"/>
    <property type="evidence" value="ECO:0000318"/>
    <property type="project" value="GO_Central"/>
</dbReference>
<dbReference type="GO" id="GO:0031681">
    <property type="term" value="F:G-protein beta-subunit binding"/>
    <property type="evidence" value="ECO:0007669"/>
    <property type="project" value="InterPro"/>
</dbReference>
<dbReference type="GO" id="GO:0007186">
    <property type="term" value="P:G protein-coupled receptor signaling pathway"/>
    <property type="evidence" value="ECO:0000318"/>
    <property type="project" value="GO_Central"/>
</dbReference>
<dbReference type="GO" id="GO:0000750">
    <property type="term" value="P:pheromone-dependent signal transduction involved in conjugation with cellular fusion"/>
    <property type="evidence" value="ECO:0007669"/>
    <property type="project" value="InterPro"/>
</dbReference>
<dbReference type="FunFam" id="4.10.260.10:FF:000008">
    <property type="entry name" value="G protein gamma subunit"/>
    <property type="match status" value="1"/>
</dbReference>
<dbReference type="Gene3D" id="4.10.260.10">
    <property type="entry name" value="Transducin (heterotrimeric G protein), gamma chain"/>
    <property type="match status" value="1"/>
</dbReference>
<dbReference type="InterPro" id="IPR015898">
    <property type="entry name" value="G-protein_gamma-like_dom"/>
</dbReference>
<dbReference type="InterPro" id="IPR036284">
    <property type="entry name" value="GGL_sf"/>
</dbReference>
<dbReference type="InterPro" id="IPR041848">
    <property type="entry name" value="Ste18_fungal"/>
</dbReference>
<dbReference type="PANTHER" id="PTHR28189">
    <property type="entry name" value="GUANINE NUCLEOTIDE-BINDING PROTEIN SUBUNIT GAMMA"/>
    <property type="match status" value="1"/>
</dbReference>
<dbReference type="PANTHER" id="PTHR28189:SF1">
    <property type="entry name" value="GUANINE NUCLEOTIDE-BINDING PROTEIN SUBUNIT GAMMA"/>
    <property type="match status" value="1"/>
</dbReference>
<dbReference type="Pfam" id="PF00631">
    <property type="entry name" value="G-gamma"/>
    <property type="match status" value="1"/>
</dbReference>
<dbReference type="SMART" id="SM01224">
    <property type="entry name" value="G_gamma"/>
    <property type="match status" value="1"/>
</dbReference>
<dbReference type="SMART" id="SM00224">
    <property type="entry name" value="GGL"/>
    <property type="match status" value="1"/>
</dbReference>
<sequence>MAEQRLPPKIQYLKLKRTEELNNKLKKELARERITASNACLSIIDYTSTNKDYAVPEVWGYMKPGENHFRASAKQARPRGGHEGSCCCIM</sequence>
<evidence type="ECO:0000250" key="1"/>
<evidence type="ECO:0000305" key="2"/>
<comment type="subunit">
    <text>G proteins are composed of 3 units, alpha, beta and gamma.</text>
</comment>
<comment type="subcellular location">
    <subcellularLocation>
        <location evidence="1">Membrane</location>
        <topology evidence="1">Peripheral membrane protein</topology>
    </subcellularLocation>
</comment>
<comment type="similarity">
    <text evidence="2">Belongs to the G protein gamma family.</text>
</comment>
<comment type="sequence caution" evidence="2">
    <conflict type="erroneous initiation">
        <sequence resource="EMBL-CDS" id="AAS51402"/>
    </conflict>
</comment>
<name>GBG_EREGS</name>
<protein>
    <recommendedName>
        <fullName>Guanine nucleotide-binding protein subunit gamma</fullName>
    </recommendedName>
</protein>
<reference key="1">
    <citation type="journal article" date="2004" name="Science">
        <title>The Ashbya gossypii genome as a tool for mapping the ancient Saccharomyces cerevisiae genome.</title>
        <authorList>
            <person name="Dietrich F.S."/>
            <person name="Voegeli S."/>
            <person name="Brachat S."/>
            <person name="Lerch A."/>
            <person name="Gates K."/>
            <person name="Steiner S."/>
            <person name="Mohr C."/>
            <person name="Poehlmann R."/>
            <person name="Luedi P."/>
            <person name="Choi S."/>
            <person name="Wing R.A."/>
            <person name="Flavier A."/>
            <person name="Gaffney T.D."/>
            <person name="Philippsen P."/>
        </authorList>
    </citation>
    <scope>NUCLEOTIDE SEQUENCE [LARGE SCALE GENOMIC DNA]</scope>
    <source>
        <strain>ATCC 10895 / CBS 109.51 / FGSC 9923 / NRRL Y-1056</strain>
    </source>
</reference>
<reference key="2">
    <citation type="journal article" date="2013" name="G3 (Bethesda)">
        <title>Genomes of Ashbya fungi isolated from insects reveal four mating-type loci, numerous translocations, lack of transposons, and distinct gene duplications.</title>
        <authorList>
            <person name="Dietrich F.S."/>
            <person name="Voegeli S."/>
            <person name="Kuo S."/>
            <person name="Philippsen P."/>
        </authorList>
    </citation>
    <scope>GENOME REANNOTATION</scope>
    <source>
        <strain>ATCC 10895 / CBS 109.51 / FGSC 9923 / NRRL Y-1056</strain>
    </source>
</reference>
<accession>Q75BU5</accession>
<feature type="chain" id="PRO_0000194805" description="Guanine nucleotide-binding protein subunit gamma">
    <location>
        <begin position="1"/>
        <end position="87"/>
    </location>
</feature>
<feature type="propeptide" id="PRO_0000396768" description="Removed in mature form" evidence="1">
    <location>
        <begin position="88"/>
        <end position="90"/>
    </location>
</feature>
<feature type="modified residue" description="Cysteine methyl ester" evidence="1">
    <location>
        <position position="87"/>
    </location>
</feature>
<feature type="lipid moiety-binding region" description="S-palmitoyl cysteine" evidence="1">
    <location>
        <position position="86"/>
    </location>
</feature>
<feature type="lipid moiety-binding region" description="S-farnesyl cysteine" evidence="1">
    <location>
        <position position="87"/>
    </location>
</feature>